<evidence type="ECO:0000255" key="1"/>
<evidence type="ECO:0000255" key="2">
    <source>
        <dbReference type="PROSITE-ProRule" id="PRU00798"/>
    </source>
</evidence>
<evidence type="ECO:0000256" key="3">
    <source>
        <dbReference type="SAM" id="MobiDB-lite"/>
    </source>
</evidence>
<evidence type="ECO:0000269" key="4">
    <source>
    </source>
</evidence>
<evidence type="ECO:0000269" key="5">
    <source>
    </source>
</evidence>
<evidence type="ECO:0000269" key="6">
    <source>
    </source>
</evidence>
<evidence type="ECO:0000269" key="7">
    <source>
    </source>
</evidence>
<evidence type="ECO:0000269" key="8">
    <source>
    </source>
</evidence>
<evidence type="ECO:0000269" key="9">
    <source>
    </source>
</evidence>
<evidence type="ECO:0000303" key="10">
    <source>
    </source>
</evidence>
<evidence type="ECO:0000305" key="11"/>
<evidence type="ECO:0007829" key="12">
    <source>
        <dbReference type="PDB" id="1H0Z"/>
    </source>
</evidence>
<evidence type="ECO:0007829" key="13">
    <source>
        <dbReference type="PDB" id="1HDL"/>
    </source>
</evidence>
<evidence type="ECO:0007829" key="14">
    <source>
        <dbReference type="PDB" id="1UVF"/>
    </source>
</evidence>
<evidence type="ECO:0007829" key="15">
    <source>
        <dbReference type="PDB" id="1UVG"/>
    </source>
</evidence>
<evidence type="ECO:0007829" key="16">
    <source>
        <dbReference type="PDB" id="5YHN"/>
    </source>
</evidence>
<reference key="1">
    <citation type="journal article" date="1999" name="J. Biol. Chem.">
        <title>LEKTI, a novel 15-domain type of human serine proteinase inhibitor.</title>
        <authorList>
            <person name="Maegert H.-J."/>
            <person name="Staendker L."/>
            <person name="Kreutzmann P."/>
            <person name="Zucht H.-D."/>
            <person name="Reinecke M."/>
            <person name="Sommerhoff C.P."/>
            <person name="Fritz H."/>
            <person name="Forssmann W.-G."/>
        </authorList>
    </citation>
    <scope>NUCLEOTIDE SEQUENCE [MRNA] (ISOFORMS F-L)</scope>
    <scope>PARTIAL PROTEIN SEQUENCE</scope>
    <scope>VARIANTS ARG-267; VAL-335; ASN-368; GLU-420 AND GLN-711</scope>
    <scope>FUNCTION</scope>
    <scope>TISSUE SPECIFICITY</scope>
    <source>
        <tissue>Epithelium</tissue>
    </source>
</reference>
<reference key="2">
    <citation type="journal article" date="2000" name="Nat. Genet.">
        <title>Mutations in SPINK5, encoding a serine protease inhibitor, cause Netherton syndrome.</title>
        <authorList>
            <person name="Chavanas S."/>
            <person name="Bodemer C."/>
            <person name="Rochat A."/>
            <person name="Hamel-Teillac D."/>
            <person name="Ali M."/>
            <person name="Irvine A.D."/>
            <person name="Bonafe J.-L."/>
            <person name="Wilkinson J."/>
            <person name="Taieb A."/>
            <person name="Barrandon Y."/>
            <person name="Harper J.I."/>
            <person name="de Prost Y."/>
            <person name="Hovnanian A."/>
        </authorList>
    </citation>
    <scope>NUCLEOTIDE SEQUENCE [GENOMIC DNA]</scope>
    <scope>INVOLVEMENT IN NETHERTON SYNDROME</scope>
    <scope>VARIANTS ARG-267 AND ASN-368</scope>
</reference>
<reference key="3">
    <citation type="journal article" date="2006" name="J. Invest. Dermatol.">
        <title>SPINK5, the defective gene in netherton syndrome, encodes multiple LEKTI isoforms derived from alternative pre-mRNA processing.</title>
        <authorList>
            <person name="Tartaglia-Polcini A."/>
            <person name="Bonnart C."/>
            <person name="Micheloni A."/>
            <person name="Cianfarani F."/>
            <person name="Andre A."/>
            <person name="Zambruno G."/>
            <person name="Hovnanian A."/>
            <person name="D'Alessio M."/>
        </authorList>
    </citation>
    <scope>NUCLEOTIDE SEQUENCE [MRNA] (ISOFORMS SHORT; F-L AND LONG)</scope>
    <scope>ALTERNATIVE SPLICING</scope>
    <scope>VARIANTS ARG-267; VAL-335; ASN-368; GLU-420 AND GLN-711</scope>
    <source>
        <tissue>Keratinocyte</tissue>
    </source>
</reference>
<reference key="4">
    <citation type="journal article" date="2004" name="Nature">
        <title>The DNA sequence and comparative analysis of human chromosome 5.</title>
        <authorList>
            <person name="Schmutz J."/>
            <person name="Martin J."/>
            <person name="Terry A."/>
            <person name="Couronne O."/>
            <person name="Grimwood J."/>
            <person name="Lowry S."/>
            <person name="Gordon L.A."/>
            <person name="Scott D."/>
            <person name="Xie G."/>
            <person name="Huang W."/>
            <person name="Hellsten U."/>
            <person name="Tran-Gyamfi M."/>
            <person name="She X."/>
            <person name="Prabhakar S."/>
            <person name="Aerts A."/>
            <person name="Altherr M."/>
            <person name="Bajorek E."/>
            <person name="Black S."/>
            <person name="Branscomb E."/>
            <person name="Caoile C."/>
            <person name="Challacombe J.F."/>
            <person name="Chan Y.M."/>
            <person name="Denys M."/>
            <person name="Detter J.C."/>
            <person name="Escobar J."/>
            <person name="Flowers D."/>
            <person name="Fotopulos D."/>
            <person name="Glavina T."/>
            <person name="Gomez M."/>
            <person name="Gonzales E."/>
            <person name="Goodstein D."/>
            <person name="Grigoriev I."/>
            <person name="Groza M."/>
            <person name="Hammon N."/>
            <person name="Hawkins T."/>
            <person name="Haydu L."/>
            <person name="Israni S."/>
            <person name="Jett J."/>
            <person name="Kadner K."/>
            <person name="Kimball H."/>
            <person name="Kobayashi A."/>
            <person name="Lopez F."/>
            <person name="Lou Y."/>
            <person name="Martinez D."/>
            <person name="Medina C."/>
            <person name="Morgan J."/>
            <person name="Nandkeshwar R."/>
            <person name="Noonan J.P."/>
            <person name="Pitluck S."/>
            <person name="Pollard M."/>
            <person name="Predki P."/>
            <person name="Priest J."/>
            <person name="Ramirez L."/>
            <person name="Retterer J."/>
            <person name="Rodriguez A."/>
            <person name="Rogers S."/>
            <person name="Salamov A."/>
            <person name="Salazar A."/>
            <person name="Thayer N."/>
            <person name="Tice H."/>
            <person name="Tsai M."/>
            <person name="Ustaszewska A."/>
            <person name="Vo N."/>
            <person name="Wheeler J."/>
            <person name="Wu K."/>
            <person name="Yang J."/>
            <person name="Dickson M."/>
            <person name="Cheng J.-F."/>
            <person name="Eichler E.E."/>
            <person name="Olsen A."/>
            <person name="Pennacchio L.A."/>
            <person name="Rokhsar D.S."/>
            <person name="Richardson P."/>
            <person name="Lucas S.M."/>
            <person name="Myers R.M."/>
            <person name="Rubin E.M."/>
        </authorList>
    </citation>
    <scope>NUCLEOTIDE SEQUENCE [LARGE SCALE GENOMIC DNA]</scope>
</reference>
<reference key="5">
    <citation type="journal article" date="2001" name="J. Invest. Dermatol.">
        <title>The spectrum of pathogenic mutations in SPINK5 in 19 families with Netherton syndrome: implications for mutation detection and first case of prenatal diagnosis.</title>
        <authorList>
            <person name="Sprecher E."/>
            <person name="Chavanas S."/>
            <person name="DiGiovanna J.J."/>
            <person name="Amin S."/>
            <person name="Nielsen K."/>
            <person name="Prendiville J.S."/>
            <person name="Silverman R."/>
            <person name="Esterly N.B."/>
            <person name="Spraker M.K."/>
            <person name="Guelig E."/>
            <person name="de Luna M.L."/>
            <person name="Williams M.L."/>
            <person name="Buehler B."/>
            <person name="Siegfried E.C."/>
            <person name="Van Maldergem L."/>
            <person name="Pfendner E."/>
            <person name="Bale S.J."/>
            <person name="Uitto J."/>
            <person name="Hovnanian A."/>
            <person name="Richard G."/>
        </authorList>
    </citation>
    <scope>NUCLEOTIDE SEQUENCE [GENOMIC DNA] OF 202-222 AND 266-294</scope>
</reference>
<reference key="6">
    <citation type="journal article" date="2001" name="J. Protein Chem.">
        <title>Purification and partial amino acid sequence of proteins from human epidermal keratinocyte conditioned medium.</title>
        <authorList>
            <person name="Ahmed A."/>
            <person name="Kandola P."/>
            <person name="Ziada G."/>
            <person name="Parenteau N."/>
        </authorList>
    </citation>
    <scope>PROTEIN SEQUENCE OF 490-507</scope>
    <source>
        <tissue>Foreskin keratinocyte</tissue>
    </source>
</reference>
<reference key="7">
    <citation type="journal article" date="2007" name="Mol. Biol. Cell">
        <title>LEKTI fragments specifically inhibit KLK5, KLK7, and KLK14 and control desquamation through a pH-dependent interaction.</title>
        <authorList>
            <person name="Deraison C."/>
            <person name="Bonnart C."/>
            <person name="Lopez F."/>
            <person name="Besson C."/>
            <person name="Robinson R."/>
            <person name="Jayakumar A."/>
            <person name="Wagberg F."/>
            <person name="Brattsand M."/>
            <person name="Hachem J.P."/>
            <person name="Leonardsson G."/>
            <person name="Hovnanian A."/>
        </authorList>
    </citation>
    <scope>FUNCTION</scope>
    <scope>CLEAVAGE BY FURIN</scope>
    <scope>INHIBITION OF KLK5; KLK7 AND KLK14</scope>
</reference>
<reference key="8">
    <citation type="journal article" date="2010" name="J. Proteome Res.">
        <title>New role for LEKTI in skin barrier formation: label-free quantitative proteomic identification of caspase 14 as a novel target for the protease inhibitor LEKTI.</title>
        <authorList>
            <person name="Bennett K."/>
            <person name="Callard R."/>
            <person name="Heywood W."/>
            <person name="Harper J."/>
            <person name="Jayakumar A."/>
            <person name="Clayman G.L."/>
            <person name="Di W.L."/>
            <person name="Mills K."/>
        </authorList>
    </citation>
    <scope>FUNCTION</scope>
    <scope>INHIBITION OF CASP14</scope>
</reference>
<reference key="9">
    <citation type="journal article" date="2003" name="J. Mol. Biol.">
        <title>Homologous proteins with different folds: the three-dimensional structures of domains 1 and 6 of the multiple Kazal-type inhibitor LEKTI.</title>
        <authorList>
            <person name="Lauber T."/>
            <person name="Schulz A."/>
            <person name="Schweimer K."/>
            <person name="Adermann K."/>
            <person name="Marx U.C."/>
        </authorList>
    </citation>
    <scope>STRUCTURE BY NMR OF 23-77 AND 356-423</scope>
</reference>
<reference key="10">
    <citation type="journal article" date="2004" name="Biochemistry">
        <title>The solution structure of a chimeric LEKTI domain reveals a chameleon sequence.</title>
        <authorList>
            <person name="Tidow H."/>
            <person name="Lauber T."/>
            <person name="Vitzithum K."/>
            <person name="Sommerhoff C.P."/>
            <person name="Rosch P."/>
            <person name="Marx U.C."/>
        </authorList>
    </citation>
    <scope>STRUCTURE BY NMR OF 989-1064</scope>
</reference>
<reference key="11">
    <citation type="journal article" date="2001" name="Nat. Genet.">
        <title>Gene polymorphism in Netherton and common atopic disease.</title>
        <authorList>
            <person name="Walley A.J."/>
            <person name="Chavanas S."/>
            <person name="Moffatt M.F."/>
            <person name="Esnouf R.M."/>
            <person name="Ubhi B."/>
            <person name="Lawrence R."/>
            <person name="Wong K."/>
            <person name="Abecasis G.R."/>
            <person name="Jones E.Y."/>
            <person name="Harper J.I."/>
            <person name="Hovnanian A."/>
            <person name="Cookson W.O.C.M."/>
        </authorList>
    </citation>
    <scope>VARIANT GLU-420</scope>
</reference>
<sequence length="1064" mass="120714">MKIATVSVLLPLALCLIQDAASKNEDQEMCHEFQAFMKNGKLFCPQDKKFFQSLDGIMFINKCATCKMILEKEAKSQKRARHLARAPKATAPTELNCDDFKKGERDGDFICPDYYEAVCGTDGKTYDNRCALCAENAKTGSQIGVKSEGECKSSNPEQDVCSAFRPFVRDGRLGCTRENDPVLGPDGKTHGNKCAMCAELFLKEAENAKREGETRIRRNAEKDFCKEYEKQVRNGRLFCTRESDPVRGPDGRMHGNKCALCAEIFKQRFSEENSKTDQNLGKAEEKTKVKREIVKLCSQYQNQAKNGILFCTRENDPIRGPDGKMHGNLCSMCQAYFQAENEEKKKAEARARNKRESGKATSYAELCSEYRKLVRNGKLACTRENDPIQGPDGKVHGNTCSMCEVFFQAEEEEKKKKEGKSRNKRQSKSTASFEELCSEYRKSRKNGRLFCTRENDPIQGPDGKMHGNTCSMCEAFFQQEERARAKAKREAAKEICSEFRDQVRNGTLICTREHNPVRGPDGKMHGNKCAMCASVFKLEEEEKKNDKEEKGKVEAEKVKREAVQELCSEYRHYVRNGRLPCTRENDPIEGLDGKIHGNTCSMCEAFFQQEAKEKERAEPRAKVKREAEKETCDEFRRLLQNGKLFCTRENDPVRGPDGKTHGNKCAMCKAVFQKENEERKRKEEEDQRNAAGHGSSGGGGGNTQDECAEYREQMKNGRLSCTRESDPVRDADGKSYNNQCTMCKAKLEREAERKNEYSRSRSNGTGSESGKDTCDEFRSQMKNGKLICTRESDPVRGPDGKTHGNKCTMCKEKLEREAAEKKKKEDEDRSNTGERSNTGERSNDKEDLCREFRSMQRNGKLICTRENNPVRGPYGKMHINKCAMCQSIFDREANERKKKDEEKSSSKPSNNAKDECSEFRNYIRNNELICPRENDPVHGADGKFYTNKCYMCRAVFLTEALERAKLQEKPSHVRASQEEDSPDSFSSLDSEMCKDYRVLPRIGYLCPKDLKPVCGDDGQTYNNPCMLCHENLIRQTNTHIRSTGKCEESSTPGTTAASMPPSDE</sequence>
<accession>Q9NQ38</accession>
<accession>A8MYE8</accession>
<accession>B7WPB7</accession>
<accession>D6REN5</accession>
<accession>O75770</accession>
<accession>Q3LX95</accession>
<accession>Q3LX96</accession>
<accession>Q3LX97</accession>
<accession>Q96PP2</accession>
<accession>Q96PP3</accession>
<protein>
    <recommendedName>
        <fullName>Serine protease inhibitor Kazal-type 5</fullName>
    </recommendedName>
    <alternativeName>
        <fullName>Lympho-epithelial Kazal-type-related inhibitor</fullName>
        <shortName>LEKTI</shortName>
    </alternativeName>
    <component>
        <recommendedName>
            <fullName>Hemofiltrate peptide HF6478</fullName>
        </recommendedName>
    </component>
    <component>
        <recommendedName>
            <fullName>Hemofiltrate peptide HF7665</fullName>
        </recommendedName>
    </component>
</protein>
<dbReference type="EMBL" id="AJ228139">
    <property type="protein sequence ID" value="CAB40839.1"/>
    <property type="molecule type" value="mRNA"/>
</dbReference>
<dbReference type="EMBL" id="AJ391230">
    <property type="protein sequence ID" value="CAB96877.1"/>
    <property type="molecule type" value="Genomic_DNA"/>
</dbReference>
<dbReference type="EMBL" id="AJ270944">
    <property type="protein sequence ID" value="CAB96877.1"/>
    <property type="status" value="JOINED"/>
    <property type="molecule type" value="Genomic_DNA"/>
</dbReference>
<dbReference type="EMBL" id="AJ391231">
    <property type="protein sequence ID" value="CAB96877.1"/>
    <property type="status" value="JOINED"/>
    <property type="molecule type" value="Genomic_DNA"/>
</dbReference>
<dbReference type="EMBL" id="AJ391232">
    <property type="protein sequence ID" value="CAB96877.1"/>
    <property type="status" value="JOINED"/>
    <property type="molecule type" value="Genomic_DNA"/>
</dbReference>
<dbReference type="EMBL" id="AJ391233">
    <property type="protein sequence ID" value="CAB96877.1"/>
    <property type="status" value="JOINED"/>
    <property type="molecule type" value="Genomic_DNA"/>
</dbReference>
<dbReference type="EMBL" id="AJ391234">
    <property type="protein sequence ID" value="CAB96877.1"/>
    <property type="status" value="JOINED"/>
    <property type="molecule type" value="Genomic_DNA"/>
</dbReference>
<dbReference type="EMBL" id="AJ391235">
    <property type="protein sequence ID" value="CAB96877.1"/>
    <property type="status" value="JOINED"/>
    <property type="molecule type" value="Genomic_DNA"/>
</dbReference>
<dbReference type="EMBL" id="AJ276579">
    <property type="protein sequence ID" value="CAB96877.1"/>
    <property type="status" value="JOINED"/>
    <property type="molecule type" value="Genomic_DNA"/>
</dbReference>
<dbReference type="EMBL" id="AJ391236">
    <property type="protein sequence ID" value="CAB96877.1"/>
    <property type="status" value="JOINED"/>
    <property type="molecule type" value="Genomic_DNA"/>
</dbReference>
<dbReference type="EMBL" id="AJ276580">
    <property type="protein sequence ID" value="CAB96877.1"/>
    <property type="status" value="JOINED"/>
    <property type="molecule type" value="Genomic_DNA"/>
</dbReference>
<dbReference type="EMBL" id="AJ391237">
    <property type="protein sequence ID" value="CAB96877.1"/>
    <property type="status" value="JOINED"/>
    <property type="molecule type" value="Genomic_DNA"/>
</dbReference>
<dbReference type="EMBL" id="AJ391238">
    <property type="protein sequence ID" value="CAB96877.1"/>
    <property type="status" value="JOINED"/>
    <property type="molecule type" value="Genomic_DNA"/>
</dbReference>
<dbReference type="EMBL" id="AJ391239">
    <property type="protein sequence ID" value="CAB96877.1"/>
    <property type="status" value="JOINED"/>
    <property type="molecule type" value="Genomic_DNA"/>
</dbReference>
<dbReference type="EMBL" id="AJ391240">
    <property type="protein sequence ID" value="CAB96877.1"/>
    <property type="status" value="JOINED"/>
    <property type="molecule type" value="Genomic_DNA"/>
</dbReference>
<dbReference type="EMBL" id="AJ391241">
    <property type="protein sequence ID" value="CAB96877.1"/>
    <property type="status" value="JOINED"/>
    <property type="molecule type" value="Genomic_DNA"/>
</dbReference>
<dbReference type="EMBL" id="AJ276578">
    <property type="protein sequence ID" value="CAB96877.1"/>
    <property type="status" value="JOINED"/>
    <property type="molecule type" value="Genomic_DNA"/>
</dbReference>
<dbReference type="EMBL" id="AJ391242">
    <property type="protein sequence ID" value="CAB96877.1"/>
    <property type="status" value="JOINED"/>
    <property type="molecule type" value="Genomic_DNA"/>
</dbReference>
<dbReference type="EMBL" id="AJ391243">
    <property type="protein sequence ID" value="CAB96877.1"/>
    <property type="status" value="JOINED"/>
    <property type="molecule type" value="Genomic_DNA"/>
</dbReference>
<dbReference type="EMBL" id="AJ391244">
    <property type="protein sequence ID" value="CAB96877.1"/>
    <property type="status" value="JOINED"/>
    <property type="molecule type" value="Genomic_DNA"/>
</dbReference>
<dbReference type="EMBL" id="AJ391245">
    <property type="protein sequence ID" value="CAB96877.1"/>
    <property type="status" value="JOINED"/>
    <property type="molecule type" value="Genomic_DNA"/>
</dbReference>
<dbReference type="EMBL" id="AJ391246">
    <property type="protein sequence ID" value="CAB96877.1"/>
    <property type="status" value="JOINED"/>
    <property type="molecule type" value="Genomic_DNA"/>
</dbReference>
<dbReference type="EMBL" id="AJ391247">
    <property type="protein sequence ID" value="CAB96877.1"/>
    <property type="status" value="JOINED"/>
    <property type="molecule type" value="Genomic_DNA"/>
</dbReference>
<dbReference type="EMBL" id="AJ391248">
    <property type="protein sequence ID" value="CAB96877.1"/>
    <property type="status" value="JOINED"/>
    <property type="molecule type" value="Genomic_DNA"/>
</dbReference>
<dbReference type="EMBL" id="AJ391249">
    <property type="protein sequence ID" value="CAB96877.1"/>
    <property type="status" value="JOINED"/>
    <property type="molecule type" value="Genomic_DNA"/>
</dbReference>
<dbReference type="EMBL" id="AJ391250">
    <property type="protein sequence ID" value="CAB96877.1"/>
    <property type="status" value="JOINED"/>
    <property type="molecule type" value="Genomic_DNA"/>
</dbReference>
<dbReference type="EMBL" id="AJ391251">
    <property type="protein sequence ID" value="CAB96877.1"/>
    <property type="status" value="JOINED"/>
    <property type="molecule type" value="Genomic_DNA"/>
</dbReference>
<dbReference type="EMBL" id="AJ391252">
    <property type="protein sequence ID" value="CAB96877.1"/>
    <property type="status" value="JOINED"/>
    <property type="molecule type" value="Genomic_DNA"/>
</dbReference>
<dbReference type="EMBL" id="AJ391253">
    <property type="protein sequence ID" value="CAB96877.1"/>
    <property type="status" value="JOINED"/>
    <property type="molecule type" value="Genomic_DNA"/>
</dbReference>
<dbReference type="EMBL" id="AJ391254">
    <property type="protein sequence ID" value="CAB96877.1"/>
    <property type="status" value="JOINED"/>
    <property type="molecule type" value="Genomic_DNA"/>
</dbReference>
<dbReference type="EMBL" id="AJ276577">
    <property type="protein sequence ID" value="CAB96877.1"/>
    <property type="status" value="JOINED"/>
    <property type="molecule type" value="Genomic_DNA"/>
</dbReference>
<dbReference type="EMBL" id="DQ149927">
    <property type="protein sequence ID" value="ABA06534.1"/>
    <property type="molecule type" value="mRNA"/>
</dbReference>
<dbReference type="EMBL" id="DQ149928">
    <property type="protein sequence ID" value="ABA06535.1"/>
    <property type="molecule type" value="mRNA"/>
</dbReference>
<dbReference type="EMBL" id="DQ149929">
    <property type="protein sequence ID" value="ABA06536.1"/>
    <property type="molecule type" value="mRNA"/>
</dbReference>
<dbReference type="EMBL" id="AC008722">
    <property type="status" value="NOT_ANNOTATED_CDS"/>
    <property type="molecule type" value="Genomic_DNA"/>
</dbReference>
<dbReference type="EMBL" id="AC116334">
    <property type="status" value="NOT_ANNOTATED_CDS"/>
    <property type="molecule type" value="Genomic_DNA"/>
</dbReference>
<dbReference type="EMBL" id="AF295784">
    <property type="protein sequence ID" value="AAK97139.1"/>
    <property type="molecule type" value="Genomic_DNA"/>
</dbReference>
<dbReference type="EMBL" id="AF295783">
    <property type="protein sequence ID" value="AAK97140.1"/>
    <property type="molecule type" value="Genomic_DNA"/>
</dbReference>
<dbReference type="CCDS" id="CCDS43382.1">
    <molecule id="Q9NQ38-1"/>
</dbReference>
<dbReference type="CCDS" id="CCDS47300.1">
    <molecule id="Q9NQ38-3"/>
</dbReference>
<dbReference type="CCDS" id="CCDS47301.1">
    <molecule id="Q9NQ38-2"/>
</dbReference>
<dbReference type="RefSeq" id="NP_001121170.1">
    <molecule id="Q9NQ38-3"/>
    <property type="nucleotide sequence ID" value="NM_001127698.2"/>
</dbReference>
<dbReference type="RefSeq" id="NP_001121171.1">
    <molecule id="Q9NQ38-2"/>
    <property type="nucleotide sequence ID" value="NM_001127699.2"/>
</dbReference>
<dbReference type="RefSeq" id="NP_006837.2">
    <molecule id="Q9NQ38-1"/>
    <property type="nucleotide sequence ID" value="NM_006846.4"/>
</dbReference>
<dbReference type="PDB" id="1H0Z">
    <property type="method" value="NMR"/>
    <property type="chains" value="A=356-423"/>
</dbReference>
<dbReference type="PDB" id="1HDL">
    <property type="method" value="NMR"/>
    <property type="chains" value="A=23-77"/>
</dbReference>
<dbReference type="PDB" id="1UUC">
    <property type="method" value="NMR"/>
    <property type="chains" value="A=23-77"/>
</dbReference>
<dbReference type="PDB" id="1UVF">
    <property type="method" value="NMR"/>
    <property type="chains" value="A=989-1047"/>
</dbReference>
<dbReference type="PDB" id="1UVG">
    <property type="method" value="NMR"/>
    <property type="chains" value="A=989-1064"/>
</dbReference>
<dbReference type="PDB" id="5YHN">
    <property type="method" value="NMR"/>
    <property type="chains" value="A=220-288"/>
</dbReference>
<dbReference type="PDBsum" id="1H0Z"/>
<dbReference type="PDBsum" id="1HDL"/>
<dbReference type="PDBsum" id="1UUC"/>
<dbReference type="PDBsum" id="1UVF"/>
<dbReference type="PDBsum" id="1UVG"/>
<dbReference type="PDBsum" id="5YHN"/>
<dbReference type="SMR" id="Q9NQ38"/>
<dbReference type="BioGRID" id="116196">
    <property type="interactions" value="20"/>
</dbReference>
<dbReference type="FunCoup" id="Q9NQ38">
    <property type="interactions" value="90"/>
</dbReference>
<dbReference type="IntAct" id="Q9NQ38">
    <property type="interactions" value="10"/>
</dbReference>
<dbReference type="STRING" id="9606.ENSP00000352936"/>
<dbReference type="MEROPS" id="I01.013"/>
<dbReference type="MEROPS" id="I01.028"/>
<dbReference type="MEROPS" id="I01.029"/>
<dbReference type="MEROPS" id="I01.030"/>
<dbReference type="MEROPS" id="I01.032"/>
<dbReference type="MEROPS" id="I01.044"/>
<dbReference type="MEROPS" id="I01.950"/>
<dbReference type="MEROPS" id="I01.951"/>
<dbReference type="MEROPS" id="I01.953"/>
<dbReference type="MEROPS" id="I01.954"/>
<dbReference type="MEROPS" id="I01.955"/>
<dbReference type="MEROPS" id="I01.957"/>
<dbReference type="MEROPS" id="I01.958"/>
<dbReference type="MEROPS" id="I01.959"/>
<dbReference type="MEROPS" id="I01.960"/>
<dbReference type="GlyGen" id="Q9NQ38">
    <property type="glycosylation" value="2 sites"/>
</dbReference>
<dbReference type="iPTMnet" id="Q9NQ38"/>
<dbReference type="PhosphoSitePlus" id="Q9NQ38"/>
<dbReference type="BioMuta" id="SPINK5"/>
<dbReference type="DMDM" id="212276440"/>
<dbReference type="jPOST" id="Q9NQ38"/>
<dbReference type="MassIVE" id="Q9NQ38"/>
<dbReference type="PaxDb" id="9606-ENSP00000352936"/>
<dbReference type="PeptideAtlas" id="Q9NQ38"/>
<dbReference type="ProteomicsDB" id="82074">
    <molecule id="Q9NQ38-1"/>
</dbReference>
<dbReference type="ProteomicsDB" id="82075">
    <molecule id="Q9NQ38-2"/>
</dbReference>
<dbReference type="ProteomicsDB" id="82076">
    <molecule id="Q9NQ38-3"/>
</dbReference>
<dbReference type="Pumba" id="Q9NQ38"/>
<dbReference type="Antibodypedia" id="1727">
    <property type="antibodies" value="189 antibodies from 28 providers"/>
</dbReference>
<dbReference type="DNASU" id="11005"/>
<dbReference type="Ensembl" id="ENST00000256084.8">
    <molecule id="Q9NQ38-1"/>
    <property type="protein sequence ID" value="ENSP00000256084.7"/>
    <property type="gene ID" value="ENSG00000133710.17"/>
</dbReference>
<dbReference type="Ensembl" id="ENST00000359874.7">
    <molecule id="Q9NQ38-3"/>
    <property type="protein sequence ID" value="ENSP00000352936.3"/>
    <property type="gene ID" value="ENSG00000133710.17"/>
</dbReference>
<dbReference type="Ensembl" id="ENST00000398454.5">
    <molecule id="Q9NQ38-2"/>
    <property type="protein sequence ID" value="ENSP00000381472.1"/>
    <property type="gene ID" value="ENSG00000133710.17"/>
</dbReference>
<dbReference type="GeneID" id="11005"/>
<dbReference type="KEGG" id="hsa:11005"/>
<dbReference type="MANE-Select" id="ENST00000256084.8">
    <property type="protein sequence ID" value="ENSP00000256084.7"/>
    <property type="RefSeq nucleotide sequence ID" value="NM_006846.4"/>
    <property type="RefSeq protein sequence ID" value="NP_006837.2"/>
</dbReference>
<dbReference type="UCSC" id="uc003low.2">
    <molecule id="Q9NQ38-1"/>
    <property type="organism name" value="human"/>
</dbReference>
<dbReference type="AGR" id="HGNC:15464"/>
<dbReference type="CTD" id="11005"/>
<dbReference type="DisGeNET" id="11005"/>
<dbReference type="GeneCards" id="SPINK5"/>
<dbReference type="HGNC" id="HGNC:15464">
    <property type="gene designation" value="SPINK5"/>
</dbReference>
<dbReference type="HPA" id="ENSG00000133710">
    <property type="expression patterns" value="Tissue enhanced (cervix, esophagus, skin, vagina)"/>
</dbReference>
<dbReference type="MalaCards" id="SPINK5"/>
<dbReference type="MIM" id="256500">
    <property type="type" value="phenotype"/>
</dbReference>
<dbReference type="MIM" id="605010">
    <property type="type" value="gene"/>
</dbReference>
<dbReference type="neXtProt" id="NX_Q9NQ38"/>
<dbReference type="OpenTargets" id="ENSG00000133710"/>
<dbReference type="Orphanet" id="634">
    <property type="disease" value="Netherton syndrome"/>
</dbReference>
<dbReference type="PharmGKB" id="PA37962"/>
<dbReference type="VEuPathDB" id="HostDB:ENSG00000133710"/>
<dbReference type="eggNOG" id="KOG3649">
    <property type="taxonomic scope" value="Eukaryota"/>
</dbReference>
<dbReference type="GeneTree" id="ENSGT00510000048608"/>
<dbReference type="InParanoid" id="Q9NQ38"/>
<dbReference type="OMA" id="CPCKKPC"/>
<dbReference type="OrthoDB" id="126772at2759"/>
<dbReference type="PAN-GO" id="Q9NQ38">
    <property type="GO annotations" value="5 GO annotations based on evolutionary models"/>
</dbReference>
<dbReference type="PhylomeDB" id="Q9NQ38"/>
<dbReference type="TreeFam" id="TF336724"/>
<dbReference type="PathwayCommons" id="Q9NQ38"/>
<dbReference type="Reactome" id="R-HSA-6809371">
    <property type="pathway name" value="Formation of the cornified envelope"/>
</dbReference>
<dbReference type="Reactome" id="R-HSA-9725554">
    <property type="pathway name" value="Differentiation of Keratinocytes in Interfollicular Epidermis in Mammalian Skin"/>
</dbReference>
<dbReference type="SABIO-RK" id="Q9NQ38"/>
<dbReference type="SignaLink" id="Q9NQ38"/>
<dbReference type="BioGRID-ORCS" id="11005">
    <property type="hits" value="16 hits in 1143 CRISPR screens"/>
</dbReference>
<dbReference type="ChiTaRS" id="SPINK5">
    <property type="organism name" value="human"/>
</dbReference>
<dbReference type="EvolutionaryTrace" id="Q9NQ38"/>
<dbReference type="GeneWiki" id="LEKTI"/>
<dbReference type="GenomeRNAi" id="11005"/>
<dbReference type="Pharos" id="Q9NQ38">
    <property type="development level" value="Tbio"/>
</dbReference>
<dbReference type="PRO" id="PR:Q9NQ38"/>
<dbReference type="Proteomes" id="UP000005640">
    <property type="component" value="Chromosome 5"/>
</dbReference>
<dbReference type="RNAct" id="Q9NQ38">
    <property type="molecule type" value="protein"/>
</dbReference>
<dbReference type="Bgee" id="ENSG00000133710">
    <property type="expression patterns" value="Expressed in tongue squamous epithelium and 128 other cell types or tissues"/>
</dbReference>
<dbReference type="ExpressionAtlas" id="Q9NQ38">
    <property type="expression patterns" value="baseline and differential"/>
</dbReference>
<dbReference type="GO" id="GO:0005938">
    <property type="term" value="C:cell cortex"/>
    <property type="evidence" value="ECO:0000314"/>
    <property type="project" value="UniProtKB"/>
</dbReference>
<dbReference type="GO" id="GO:0005737">
    <property type="term" value="C:cytoplasm"/>
    <property type="evidence" value="ECO:0000314"/>
    <property type="project" value="UniProtKB"/>
</dbReference>
<dbReference type="GO" id="GO:0005829">
    <property type="term" value="C:cytosol"/>
    <property type="evidence" value="ECO:0000314"/>
    <property type="project" value="UniProtKB"/>
</dbReference>
<dbReference type="GO" id="GO:0005783">
    <property type="term" value="C:endoplasmic reticulum"/>
    <property type="evidence" value="ECO:0000314"/>
    <property type="project" value="UniProtKB"/>
</dbReference>
<dbReference type="GO" id="GO:0005789">
    <property type="term" value="C:endoplasmic reticulum membrane"/>
    <property type="evidence" value="ECO:0000314"/>
    <property type="project" value="UniProtKB"/>
</dbReference>
<dbReference type="GO" id="GO:0097209">
    <property type="term" value="C:epidermal lamellar body"/>
    <property type="evidence" value="ECO:0000314"/>
    <property type="project" value="UniProtKB"/>
</dbReference>
<dbReference type="GO" id="GO:0005576">
    <property type="term" value="C:extracellular region"/>
    <property type="evidence" value="ECO:0000314"/>
    <property type="project" value="UniProtKB"/>
</dbReference>
<dbReference type="GO" id="GO:0043231">
    <property type="term" value="C:intracellular membrane-bounded organelle"/>
    <property type="evidence" value="ECO:0000314"/>
    <property type="project" value="HPA"/>
</dbReference>
<dbReference type="GO" id="GO:0048471">
    <property type="term" value="C:perinuclear region of cytoplasm"/>
    <property type="evidence" value="ECO:0000314"/>
    <property type="project" value="UniProtKB"/>
</dbReference>
<dbReference type="GO" id="GO:0004867">
    <property type="term" value="F:serine-type endopeptidase inhibitor activity"/>
    <property type="evidence" value="ECO:0000314"/>
    <property type="project" value="UniProtKB"/>
</dbReference>
<dbReference type="GO" id="GO:0030154">
    <property type="term" value="P:cell differentiation"/>
    <property type="evidence" value="ECO:0000318"/>
    <property type="project" value="GO_Central"/>
</dbReference>
<dbReference type="GO" id="GO:0009913">
    <property type="term" value="P:epidermal cell differentiation"/>
    <property type="evidence" value="ECO:0000314"/>
    <property type="project" value="UniProtKB"/>
</dbReference>
<dbReference type="GO" id="GO:0030855">
    <property type="term" value="P:epithelial cell differentiation"/>
    <property type="evidence" value="ECO:0000304"/>
    <property type="project" value="UniProtKB"/>
</dbReference>
<dbReference type="GO" id="GO:0030198">
    <property type="term" value="P:extracellular matrix organization"/>
    <property type="evidence" value="ECO:0000304"/>
    <property type="project" value="UniProtKB"/>
</dbReference>
<dbReference type="GO" id="GO:0035315">
    <property type="term" value="P:hair cell differentiation"/>
    <property type="evidence" value="ECO:0000304"/>
    <property type="project" value="UniProtKB"/>
</dbReference>
<dbReference type="GO" id="GO:0016525">
    <property type="term" value="P:negative regulation of angiogenesis"/>
    <property type="evidence" value="ECO:0000304"/>
    <property type="project" value="UniProtKB"/>
</dbReference>
<dbReference type="GO" id="GO:0002787">
    <property type="term" value="P:negative regulation of antibacterial peptide production"/>
    <property type="evidence" value="ECO:0007669"/>
    <property type="project" value="Ensembl"/>
</dbReference>
<dbReference type="GO" id="GO:0050777">
    <property type="term" value="P:negative regulation of immune response"/>
    <property type="evidence" value="ECO:0000304"/>
    <property type="project" value="UniProtKB"/>
</dbReference>
<dbReference type="GO" id="GO:0045861">
    <property type="term" value="P:negative regulation of proteolysis"/>
    <property type="evidence" value="ECO:0007669"/>
    <property type="project" value="Ensembl"/>
</dbReference>
<dbReference type="GO" id="GO:0030155">
    <property type="term" value="P:regulation of cell adhesion"/>
    <property type="evidence" value="ECO:0007669"/>
    <property type="project" value="Ensembl"/>
</dbReference>
<dbReference type="GO" id="GO:0045580">
    <property type="term" value="P:regulation of T cell differentiation"/>
    <property type="evidence" value="ECO:0000304"/>
    <property type="project" value="UniProtKB"/>
</dbReference>
<dbReference type="GO" id="GO:0051884">
    <property type="term" value="P:regulation of timing of anagen"/>
    <property type="evidence" value="ECO:0000304"/>
    <property type="project" value="UniProtKB"/>
</dbReference>
<dbReference type="CDD" id="cd00104">
    <property type="entry name" value="KAZAL_FS"/>
    <property type="match status" value="2"/>
</dbReference>
<dbReference type="CDD" id="cd01327">
    <property type="entry name" value="KAZAL_PSTI"/>
    <property type="match status" value="2"/>
</dbReference>
<dbReference type="FunFam" id="3.30.60.30:FF:000001">
    <property type="entry name" value="Serine peptidase inhibitor, Kazal type 5"/>
    <property type="match status" value="12"/>
</dbReference>
<dbReference type="FunFam" id="3.30.60.30:FF:000029">
    <property type="entry name" value="Serine peptidase inhibitor, Kazal type 5"/>
    <property type="match status" value="1"/>
</dbReference>
<dbReference type="FunFam" id="3.30.60.30:FF:000033">
    <property type="entry name" value="Serine peptidase inhibitor, Kazal type 5"/>
    <property type="match status" value="1"/>
</dbReference>
<dbReference type="FunFam" id="3.30.60.30:FF:000034">
    <property type="entry name" value="Serine peptidase inhibitor, Kazal type 5"/>
    <property type="match status" value="1"/>
</dbReference>
<dbReference type="Gene3D" id="3.30.60.30">
    <property type="match status" value="15"/>
</dbReference>
<dbReference type="InterPro" id="IPR050159">
    <property type="entry name" value="Kazal-type_SerProtInhib"/>
</dbReference>
<dbReference type="InterPro" id="IPR002350">
    <property type="entry name" value="Kazal_dom"/>
</dbReference>
<dbReference type="InterPro" id="IPR036058">
    <property type="entry name" value="Kazal_dom_sf"/>
</dbReference>
<dbReference type="PANTHER" id="PTHR47499:SF1">
    <property type="entry name" value="SERINE PROTEASE INHIBITOR KAZAL-TYPE 7"/>
    <property type="match status" value="1"/>
</dbReference>
<dbReference type="PANTHER" id="PTHR47499">
    <property type="entry name" value="SERINE PROTEASE INHIBITOR KAZAL-TYPE 7 SPINK7"/>
    <property type="match status" value="1"/>
</dbReference>
<dbReference type="Pfam" id="PF00050">
    <property type="entry name" value="Kazal_1"/>
    <property type="match status" value="11"/>
</dbReference>
<dbReference type="SMART" id="SM00280">
    <property type="entry name" value="KAZAL"/>
    <property type="match status" value="14"/>
</dbReference>
<dbReference type="SUPFAM" id="SSF100895">
    <property type="entry name" value="Kazal-type serine protease inhibitors"/>
    <property type="match status" value="15"/>
</dbReference>
<dbReference type="PROSITE" id="PS00282">
    <property type="entry name" value="KAZAL_1"/>
    <property type="match status" value="2"/>
</dbReference>
<dbReference type="PROSITE" id="PS51465">
    <property type="entry name" value="KAZAL_2"/>
    <property type="match status" value="14"/>
</dbReference>
<gene>
    <name type="primary">SPINK5</name>
</gene>
<organism>
    <name type="scientific">Homo sapiens</name>
    <name type="common">Human</name>
    <dbReference type="NCBI Taxonomy" id="9606"/>
    <lineage>
        <taxon>Eukaryota</taxon>
        <taxon>Metazoa</taxon>
        <taxon>Chordata</taxon>
        <taxon>Craniata</taxon>
        <taxon>Vertebrata</taxon>
        <taxon>Euteleostomi</taxon>
        <taxon>Mammalia</taxon>
        <taxon>Eutheria</taxon>
        <taxon>Euarchontoglires</taxon>
        <taxon>Primates</taxon>
        <taxon>Haplorrhini</taxon>
        <taxon>Catarrhini</taxon>
        <taxon>Hominidae</taxon>
        <taxon>Homo</taxon>
    </lineage>
</organism>
<name>ISK5_HUMAN</name>
<feature type="signal peptide" evidence="1">
    <location>
        <begin position="1"/>
        <end position="22"/>
    </location>
</feature>
<feature type="chain" id="PRO_0000016572" description="Serine protease inhibitor Kazal-type 5">
    <location>
        <begin position="23"/>
        <end position="1064"/>
    </location>
</feature>
<feature type="peptide" id="PRO_0000016573" description="Hemofiltrate peptide HF6478">
    <location>
        <begin position="23"/>
        <end position="77"/>
    </location>
</feature>
<feature type="peptide" id="PRO_0000016574" description="Hemofiltrate peptide HF7665">
    <location>
        <begin position="356"/>
        <end position="423"/>
    </location>
</feature>
<feature type="domain" description="Kazal-like 1; atypical" evidence="2">
    <location>
        <begin position="28"/>
        <end position="66"/>
    </location>
</feature>
<feature type="domain" description="Kazal-like 2" evidence="2">
    <location>
        <begin position="91"/>
        <end position="153"/>
    </location>
</feature>
<feature type="domain" description="Kazal-like 3" evidence="2">
    <location>
        <begin position="155"/>
        <end position="216"/>
    </location>
</feature>
<feature type="domain" description="Kazal-like 4" evidence="2">
    <location>
        <begin position="219"/>
        <end position="285"/>
    </location>
</feature>
<feature type="domain" description="Kazal-like 5" evidence="2">
    <location>
        <begin position="291"/>
        <end position="352"/>
    </location>
</feature>
<feature type="domain" description="Kazal-like 6" evidence="2">
    <location>
        <begin position="361"/>
        <end position="423"/>
    </location>
</feature>
<feature type="domain" description="Kazal-like 7" evidence="2">
    <location>
        <begin position="431"/>
        <end position="489"/>
    </location>
</feature>
<feature type="domain" description="Kazal-like 8" evidence="2">
    <location>
        <begin position="490"/>
        <end position="551"/>
    </location>
</feature>
<feature type="domain" description="Kazal-like 9" evidence="2">
    <location>
        <begin position="561"/>
        <end position="622"/>
    </location>
</feature>
<feature type="domain" description="Kazal-like 10" evidence="2">
    <location>
        <begin position="626"/>
        <end position="688"/>
    </location>
</feature>
<feature type="domain" description="Kazal-like 11" evidence="2">
    <location>
        <begin position="701"/>
        <end position="757"/>
    </location>
</feature>
<feature type="domain" description="Kazal-like 12" evidence="2">
    <location>
        <begin position="768"/>
        <end position="830"/>
    </location>
</feature>
<feature type="domain" description="Kazal-like 13" evidence="2">
    <location>
        <begin position="843"/>
        <end position="905"/>
    </location>
</feature>
<feature type="domain" description="Kazal-like 14" evidence="2">
    <location>
        <begin position="910"/>
        <end position="971"/>
    </location>
</feature>
<feature type="domain" description="Kazal-like 15" evidence="2">
    <location>
        <begin position="987"/>
        <end position="1048"/>
    </location>
</feature>
<feature type="region of interest" description="Disordered" evidence="3">
    <location>
        <begin position="676"/>
        <end position="705"/>
    </location>
</feature>
<feature type="region of interest" description="Disordered" evidence="3">
    <location>
        <begin position="751"/>
        <end position="775"/>
    </location>
</feature>
<feature type="region of interest" description="Disordered" evidence="3">
    <location>
        <begin position="818"/>
        <end position="849"/>
    </location>
</feature>
<feature type="region of interest" description="Disordered" evidence="3">
    <location>
        <begin position="895"/>
        <end position="915"/>
    </location>
</feature>
<feature type="region of interest" description="Disordered" evidence="3">
    <location>
        <begin position="967"/>
        <end position="987"/>
    </location>
</feature>
<feature type="region of interest" description="Disordered" evidence="3">
    <location>
        <begin position="1041"/>
        <end position="1064"/>
    </location>
</feature>
<feature type="compositionally biased region" description="Basic and acidic residues" evidence="3">
    <location>
        <begin position="676"/>
        <end position="688"/>
    </location>
</feature>
<feature type="compositionally biased region" description="Basic and acidic residues" evidence="3">
    <location>
        <begin position="895"/>
        <end position="905"/>
    </location>
</feature>
<feature type="compositionally biased region" description="Basic and acidic residues" evidence="3">
    <location>
        <begin position="967"/>
        <end position="977"/>
    </location>
</feature>
<feature type="site" description="Reactive bond" evidence="2">
    <location>
        <begin position="46"/>
        <end position="47"/>
    </location>
</feature>
<feature type="disulfide bond">
    <location>
        <begin position="30"/>
        <end position="66"/>
    </location>
</feature>
<feature type="disulfide bond">
    <location>
        <begin position="44"/>
        <end position="63"/>
    </location>
</feature>
<feature type="disulfide bond" evidence="2">
    <location>
        <begin position="97"/>
        <end position="133"/>
    </location>
</feature>
<feature type="disulfide bond" evidence="2">
    <location>
        <begin position="111"/>
        <end position="130"/>
    </location>
</feature>
<feature type="disulfide bond" evidence="2">
    <location>
        <begin position="119"/>
        <end position="151"/>
    </location>
</feature>
<feature type="disulfide bond" evidence="2">
    <location>
        <begin position="161"/>
        <end position="197"/>
    </location>
</feature>
<feature type="disulfide bond" evidence="2">
    <location>
        <begin position="175"/>
        <end position="194"/>
    </location>
</feature>
<feature type="disulfide bond" evidence="2">
    <location>
        <begin position="225"/>
        <end position="261"/>
    </location>
</feature>
<feature type="disulfide bond" evidence="2">
    <location>
        <begin position="239"/>
        <end position="258"/>
    </location>
</feature>
<feature type="disulfide bond" evidence="2">
    <location>
        <begin position="297"/>
        <end position="333"/>
    </location>
</feature>
<feature type="disulfide bond" evidence="2">
    <location>
        <begin position="311"/>
        <end position="330"/>
    </location>
</feature>
<feature type="disulfide bond">
    <location>
        <begin position="367"/>
        <end position="403"/>
    </location>
</feature>
<feature type="disulfide bond">
    <location>
        <begin position="381"/>
        <end position="400"/>
    </location>
</feature>
<feature type="disulfide bond" evidence="2">
    <location>
        <begin position="437"/>
        <end position="473"/>
    </location>
</feature>
<feature type="disulfide bond" evidence="2">
    <location>
        <begin position="451"/>
        <end position="470"/>
    </location>
</feature>
<feature type="disulfide bond" evidence="2">
    <location>
        <begin position="496"/>
        <end position="532"/>
    </location>
</feature>
<feature type="disulfide bond" evidence="2">
    <location>
        <begin position="510"/>
        <end position="529"/>
    </location>
</feature>
<feature type="disulfide bond" evidence="2">
    <location>
        <begin position="567"/>
        <end position="603"/>
    </location>
</feature>
<feature type="disulfide bond" evidence="2">
    <location>
        <begin position="581"/>
        <end position="600"/>
    </location>
</feature>
<feature type="disulfide bond" evidence="2">
    <location>
        <begin position="632"/>
        <end position="668"/>
    </location>
</feature>
<feature type="disulfide bond" evidence="2">
    <location>
        <begin position="646"/>
        <end position="665"/>
    </location>
</feature>
<feature type="disulfide bond" evidence="2">
    <location>
        <begin position="707"/>
        <end position="743"/>
    </location>
</feature>
<feature type="disulfide bond" evidence="2">
    <location>
        <begin position="721"/>
        <end position="740"/>
    </location>
</feature>
<feature type="disulfide bond" evidence="2">
    <location>
        <begin position="774"/>
        <end position="810"/>
    </location>
</feature>
<feature type="disulfide bond" evidence="2">
    <location>
        <begin position="788"/>
        <end position="807"/>
    </location>
</feature>
<feature type="disulfide bond" evidence="2">
    <location>
        <begin position="849"/>
        <end position="885"/>
    </location>
</feature>
<feature type="disulfide bond" evidence="2">
    <location>
        <begin position="863"/>
        <end position="882"/>
    </location>
</feature>
<feature type="disulfide bond" evidence="2">
    <location>
        <begin position="916"/>
        <end position="952"/>
    </location>
</feature>
<feature type="disulfide bond" evidence="2">
    <location>
        <begin position="930"/>
        <end position="949"/>
    </location>
</feature>
<feature type="disulfide bond">
    <location>
        <begin position="993"/>
        <end position="1028"/>
    </location>
</feature>
<feature type="disulfide bond">
    <location>
        <begin position="1006"/>
        <end position="1025"/>
    </location>
</feature>
<feature type="disulfide bond">
    <location>
        <begin position="1014"/>
        <end position="1046"/>
    </location>
</feature>
<feature type="splice variant" id="VSP_040019" description="In isoform short." evidence="10">
    <original>DEC</original>
    <variation>VIY</variation>
    <location>
        <begin position="914"/>
        <end position="916"/>
    </location>
</feature>
<feature type="splice variant" id="VSP_040020" description="In isoform long." evidence="10">
    <original>D</original>
    <variation>DQCRQVQNEAEDAKFRQPGRSLASVARMSTD</variation>
    <location>
        <position position="914"/>
    </location>
</feature>
<feature type="splice variant" id="VSP_040021" description="In isoform short." evidence="10">
    <location>
        <begin position="917"/>
        <end position="1064"/>
    </location>
</feature>
<feature type="sequence variant" id="VAR_047115" description="In dbSNP:rs6892205." evidence="4 5 7">
    <original>Q</original>
    <variation>R</variation>
    <location>
        <position position="267"/>
    </location>
</feature>
<feature type="sequence variant" id="VAR_061337" description="In dbSNP:rs34482796." evidence="4 7">
    <original>A</original>
    <variation>V</variation>
    <location>
        <position position="335"/>
    </location>
</feature>
<feature type="sequence variant" id="VAR_047116" description="In dbSNP:rs2303063." evidence="4 5 7">
    <original>S</original>
    <variation>N</variation>
    <location>
        <position position="368"/>
    </location>
</feature>
<feature type="sequence variant" id="VAR_047117" description="In dbSNP:rs2303064.">
    <original>D</original>
    <variation>N</variation>
    <location>
        <position position="386"/>
    </location>
</feature>
<feature type="sequence variant" id="VAR_047118" description="In dbSNP:rs17775319.">
    <original>V</original>
    <variation>M</variation>
    <location>
        <position position="395"/>
    </location>
</feature>
<feature type="sequence variant" id="VAR_015537" description="In dbSNP:rs2303067." evidence="4 6 7">
    <original>K</original>
    <variation>E</variation>
    <location>
        <position position="420"/>
    </location>
</feature>
<feature type="sequence variant" id="VAR_047119" description="In dbSNP:rs34393923.">
    <original>R</original>
    <variation>H</variation>
    <location>
        <position position="441"/>
    </location>
</feature>
<feature type="sequence variant" id="VAR_047120" description="In dbSNP:rs35877540.">
    <original>I</original>
    <variation>M</variation>
    <location>
        <position position="588"/>
    </location>
</feature>
<feature type="sequence variant" id="VAR_047121" description="In dbSNP:rs3777134." evidence="4 7">
    <original>R</original>
    <variation>Q</variation>
    <location>
        <position position="711"/>
    </location>
</feature>
<feature type="sequence variant" id="VAR_047122" description="In dbSNP:rs2303070.">
    <original>E</original>
    <variation>D</variation>
    <location>
        <position position="825"/>
    </location>
</feature>
<feature type="sequence variant" id="VAR_047123" description="In dbSNP:rs28408445.">
    <original>S</original>
    <variation>R</variation>
    <location>
        <position position="887"/>
    </location>
</feature>
<feature type="sequence variant" id="VAR_047124" description="In dbSNP:rs3188691.">
    <original>K</original>
    <variation>E</variation>
    <location>
        <position position="969"/>
    </location>
</feature>
<feature type="sequence variant" id="VAR_047125" description="In dbSNP:rs17705005.">
    <original>H</original>
    <variation>R</variation>
    <location>
        <position position="972"/>
    </location>
</feature>
<feature type="sequence conflict" description="In Ref. 2; CAB96877." evidence="11" ref="2">
    <original>DAASKNEDQ</original>
    <variation>GQCEKDSLS</variation>
    <location>
        <begin position="19"/>
        <end position="27"/>
    </location>
</feature>
<feature type="turn" evidence="13">
    <location>
        <begin position="25"/>
        <end position="27"/>
    </location>
</feature>
<feature type="helix" evidence="13">
    <location>
        <begin position="33"/>
        <end position="36"/>
    </location>
</feature>
<feature type="strand" evidence="13">
    <location>
        <begin position="37"/>
        <end position="40"/>
    </location>
</feature>
<feature type="helix" evidence="13">
    <location>
        <begin position="48"/>
        <end position="52"/>
    </location>
</feature>
<feature type="helix" evidence="13">
    <location>
        <begin position="54"/>
        <end position="76"/>
    </location>
</feature>
<feature type="helix" evidence="16">
    <location>
        <begin position="221"/>
        <end position="230"/>
    </location>
</feature>
<feature type="helix" evidence="16">
    <location>
        <begin position="258"/>
        <end position="273"/>
    </location>
</feature>
<feature type="strand" evidence="16">
    <location>
        <begin position="274"/>
        <end position="278"/>
    </location>
</feature>
<feature type="strand" evidence="16">
    <location>
        <begin position="280"/>
        <end position="282"/>
    </location>
</feature>
<feature type="turn" evidence="16">
    <location>
        <begin position="283"/>
        <end position="286"/>
    </location>
</feature>
<feature type="helix" evidence="12">
    <location>
        <begin position="363"/>
        <end position="366"/>
    </location>
</feature>
<feature type="helix" evidence="12">
    <location>
        <begin position="367"/>
        <end position="370"/>
    </location>
</feature>
<feature type="turn" evidence="12">
    <location>
        <begin position="371"/>
        <end position="373"/>
    </location>
</feature>
<feature type="strand" evidence="12">
    <location>
        <begin position="375"/>
        <end position="377"/>
    </location>
</feature>
<feature type="helix" evidence="12">
    <location>
        <begin position="399"/>
        <end position="413"/>
    </location>
</feature>
<feature type="helix" evidence="14">
    <location>
        <begin position="990"/>
        <end position="993"/>
    </location>
</feature>
<feature type="turn" evidence="14">
    <location>
        <begin position="1000"/>
        <end position="1002"/>
    </location>
</feature>
<feature type="strand" evidence="14">
    <location>
        <begin position="1013"/>
        <end position="1015"/>
    </location>
</feature>
<feature type="turn" evidence="14">
    <location>
        <begin position="1016"/>
        <end position="1018"/>
    </location>
</feature>
<feature type="strand" evidence="14">
    <location>
        <begin position="1019"/>
        <end position="1024"/>
    </location>
</feature>
<feature type="helix" evidence="14">
    <location>
        <begin position="1025"/>
        <end position="1034"/>
    </location>
</feature>
<feature type="strand" evidence="14">
    <location>
        <begin position="1040"/>
        <end position="1045"/>
    </location>
</feature>
<feature type="helix" evidence="15">
    <location>
        <begin position="1047"/>
        <end position="1049"/>
    </location>
</feature>
<feature type="helix" evidence="15">
    <location>
        <begin position="1055"/>
        <end position="1058"/>
    </location>
</feature>
<keyword id="KW-0002">3D-structure</keyword>
<keyword id="KW-0025">Alternative splicing</keyword>
<keyword id="KW-0165">Cleavage on pair of basic residues</keyword>
<keyword id="KW-0903">Direct protein sequencing</keyword>
<keyword id="KW-1015">Disulfide bond</keyword>
<keyword id="KW-1063">Hypotrichosis</keyword>
<keyword id="KW-0977">Ichthyosis</keyword>
<keyword id="KW-0646">Protease inhibitor</keyword>
<keyword id="KW-1267">Proteomics identification</keyword>
<keyword id="KW-1185">Reference proteome</keyword>
<keyword id="KW-0677">Repeat</keyword>
<keyword id="KW-0964">Secreted</keyword>
<keyword id="KW-0722">Serine protease inhibitor</keyword>
<keyword id="KW-0732">Signal</keyword>
<proteinExistence type="evidence at protein level"/>
<comment type="function">
    <text evidence="4 8 9">Serine protease inhibitor, probably important for the anti-inflammatory and/or antimicrobial protection of mucous epithelia. Contribute to the integrity and protective barrier function of the skin by regulating the activity of defense-activating and desquamation-involved proteases. Inhibits KLK5, it's major target, in a pH-dependent manner. Inhibits KLK7, KLK14 CASP14, and trypsin.</text>
</comment>
<comment type="subcellular location">
    <subcellularLocation>
        <location>Secreted</location>
    </subcellularLocation>
</comment>
<comment type="alternative products">
    <event type="alternative splicing"/>
    <isoform>
        <id>Q9NQ38-1</id>
        <name>f-l</name>
        <sequence type="displayed"/>
    </isoform>
    <isoform>
        <id>Q9NQ38-2</id>
        <name>short</name>
        <sequence type="described" ref="VSP_040019 VSP_040021"/>
    </isoform>
    <isoform>
        <id>Q9NQ38-3</id>
        <name>long</name>
        <sequence type="described" ref="VSP_040020"/>
    </isoform>
</comment>
<comment type="tissue specificity">
    <text evidence="4">Highly expressed in the thymus and stratum corneum. Also found in the oral mucosa, parathyroid gland, Bartholin's glands, tonsils, and vaginal epithelium. Very low levels are detected in lung, kidney, and prostate.</text>
</comment>
<comment type="domain">
    <text>Contains at least one active inhibitory domain for trypsin (domain 6).</text>
</comment>
<comment type="PTM">
    <text evidence="8">Proteolytically processed by furin in individual domains (D1, D5, D6, D8 through D11, and D9 through D15) exhibiting various inhibitory potentials for multiple proteases.</text>
</comment>
<comment type="disease" evidence="5">
    <disease id="DI-00809">
        <name>Netherton syndrome</name>
        <acronym>NETH</acronym>
        <description>An autosomal recessive congenital ichthyosis associated with hair shaft abnormalities and anomalies of the immune system. Typical features are ichthyosis linearis circumflexa, ichthyosiform erythroderma, trichorrhexis invaginata (bamboo hair), atopic dermatitis, and hayfever. High postnatal mortality is due to failure to thrive, infections and hypernatremic dehydration.</description>
        <dbReference type="MIM" id="256500"/>
    </disease>
    <text>The disease is caused by variants affecting the gene represented in this entry.</text>
</comment>
<comment type="online information" name="SPINK5base">
    <link uri="https://databases.lovd.nl/shared/genes/SPINK5"/>
    <text>SPINK5 mutation db</text>
</comment>